<protein>
    <recommendedName>
        <fullName evidence="1">D-ribose pyranase</fullName>
        <ecNumber evidence="1">5.4.99.62</ecNumber>
    </recommendedName>
</protein>
<sequence length="139" mass="15239">MKKGTVLNSDISSVISRLGHTDTLVVCDAGLPIPKSTTRIDMALTQGVPSFMQVLGVVTNEMQVEAVIIAEEIKQHNPQLHETLLTHLEQLQKHQGNTIEIRYTTHEQFKQQTAGSQAVIRSGECSPYANIILCAGVTF</sequence>
<organism>
    <name type="scientific">Escherichia coli O45:K1 (strain S88 / ExPEC)</name>
    <dbReference type="NCBI Taxonomy" id="585035"/>
    <lineage>
        <taxon>Bacteria</taxon>
        <taxon>Pseudomonadati</taxon>
        <taxon>Pseudomonadota</taxon>
        <taxon>Gammaproteobacteria</taxon>
        <taxon>Enterobacterales</taxon>
        <taxon>Enterobacteriaceae</taxon>
        <taxon>Escherichia</taxon>
    </lineage>
</organism>
<dbReference type="EC" id="5.4.99.62" evidence="1"/>
<dbReference type="EMBL" id="CU928161">
    <property type="protein sequence ID" value="CAR05376.1"/>
    <property type="molecule type" value="Genomic_DNA"/>
</dbReference>
<dbReference type="RefSeq" id="WP_001350412.1">
    <property type="nucleotide sequence ID" value="NC_011742.1"/>
</dbReference>
<dbReference type="SMR" id="B7MGG8"/>
<dbReference type="KEGG" id="ecz:ECS88_4170"/>
<dbReference type="HOGENOM" id="CLU_135498_0_0_6"/>
<dbReference type="UniPathway" id="UPA00916">
    <property type="reaction ID" value="UER00888"/>
</dbReference>
<dbReference type="Proteomes" id="UP000000747">
    <property type="component" value="Chromosome"/>
</dbReference>
<dbReference type="GO" id="GO:0005829">
    <property type="term" value="C:cytosol"/>
    <property type="evidence" value="ECO:0007669"/>
    <property type="project" value="TreeGrafter"/>
</dbReference>
<dbReference type="GO" id="GO:0062193">
    <property type="term" value="F:D-ribose pyranase activity"/>
    <property type="evidence" value="ECO:0007669"/>
    <property type="project" value="UniProtKB-EC"/>
</dbReference>
<dbReference type="GO" id="GO:0016872">
    <property type="term" value="F:intramolecular lyase activity"/>
    <property type="evidence" value="ECO:0007669"/>
    <property type="project" value="UniProtKB-UniRule"/>
</dbReference>
<dbReference type="GO" id="GO:0048029">
    <property type="term" value="F:monosaccharide binding"/>
    <property type="evidence" value="ECO:0007669"/>
    <property type="project" value="InterPro"/>
</dbReference>
<dbReference type="GO" id="GO:0019303">
    <property type="term" value="P:D-ribose catabolic process"/>
    <property type="evidence" value="ECO:0007669"/>
    <property type="project" value="UniProtKB-UniRule"/>
</dbReference>
<dbReference type="FunFam" id="3.40.1650.10:FF:000002">
    <property type="entry name" value="D-ribose pyranase"/>
    <property type="match status" value="1"/>
</dbReference>
<dbReference type="Gene3D" id="3.40.1650.10">
    <property type="entry name" value="RbsD-like domain"/>
    <property type="match status" value="1"/>
</dbReference>
<dbReference type="HAMAP" id="MF_01661">
    <property type="entry name" value="D_rib_pyranase"/>
    <property type="match status" value="1"/>
</dbReference>
<dbReference type="InterPro" id="IPR023064">
    <property type="entry name" value="D-ribose_pyranase"/>
</dbReference>
<dbReference type="InterPro" id="IPR023750">
    <property type="entry name" value="RbsD-like_sf"/>
</dbReference>
<dbReference type="InterPro" id="IPR007721">
    <property type="entry name" value="RbsD_FucU"/>
</dbReference>
<dbReference type="NCBIfam" id="NF008761">
    <property type="entry name" value="PRK11797.1"/>
    <property type="match status" value="1"/>
</dbReference>
<dbReference type="PANTHER" id="PTHR37831">
    <property type="entry name" value="D-RIBOSE PYRANASE"/>
    <property type="match status" value="1"/>
</dbReference>
<dbReference type="PANTHER" id="PTHR37831:SF1">
    <property type="entry name" value="D-RIBOSE PYRANASE"/>
    <property type="match status" value="1"/>
</dbReference>
<dbReference type="Pfam" id="PF05025">
    <property type="entry name" value="RbsD_FucU"/>
    <property type="match status" value="1"/>
</dbReference>
<dbReference type="SUPFAM" id="SSF102546">
    <property type="entry name" value="RbsD-like"/>
    <property type="match status" value="1"/>
</dbReference>
<proteinExistence type="inferred from homology"/>
<reference key="1">
    <citation type="journal article" date="2009" name="PLoS Genet.">
        <title>Organised genome dynamics in the Escherichia coli species results in highly diverse adaptive paths.</title>
        <authorList>
            <person name="Touchon M."/>
            <person name="Hoede C."/>
            <person name="Tenaillon O."/>
            <person name="Barbe V."/>
            <person name="Baeriswyl S."/>
            <person name="Bidet P."/>
            <person name="Bingen E."/>
            <person name="Bonacorsi S."/>
            <person name="Bouchier C."/>
            <person name="Bouvet O."/>
            <person name="Calteau A."/>
            <person name="Chiapello H."/>
            <person name="Clermont O."/>
            <person name="Cruveiller S."/>
            <person name="Danchin A."/>
            <person name="Diard M."/>
            <person name="Dossat C."/>
            <person name="Karoui M.E."/>
            <person name="Frapy E."/>
            <person name="Garry L."/>
            <person name="Ghigo J.M."/>
            <person name="Gilles A.M."/>
            <person name="Johnson J."/>
            <person name="Le Bouguenec C."/>
            <person name="Lescat M."/>
            <person name="Mangenot S."/>
            <person name="Martinez-Jehanne V."/>
            <person name="Matic I."/>
            <person name="Nassif X."/>
            <person name="Oztas S."/>
            <person name="Petit M.A."/>
            <person name="Pichon C."/>
            <person name="Rouy Z."/>
            <person name="Ruf C.S."/>
            <person name="Schneider D."/>
            <person name="Tourret J."/>
            <person name="Vacherie B."/>
            <person name="Vallenet D."/>
            <person name="Medigue C."/>
            <person name="Rocha E.P.C."/>
            <person name="Denamur E."/>
        </authorList>
    </citation>
    <scope>NUCLEOTIDE SEQUENCE [LARGE SCALE GENOMIC DNA]</scope>
    <source>
        <strain>S88 / ExPEC</strain>
    </source>
</reference>
<feature type="chain" id="PRO_1000187141" description="D-ribose pyranase">
    <location>
        <begin position="1"/>
        <end position="139"/>
    </location>
</feature>
<feature type="active site" description="Proton donor" evidence="1">
    <location>
        <position position="20"/>
    </location>
</feature>
<feature type="binding site" evidence="1">
    <location>
        <position position="28"/>
    </location>
    <ligand>
        <name>substrate</name>
    </ligand>
</feature>
<feature type="binding site" evidence="1">
    <location>
        <position position="106"/>
    </location>
    <ligand>
        <name>substrate</name>
    </ligand>
</feature>
<feature type="binding site" evidence="1">
    <location>
        <begin position="128"/>
        <end position="130"/>
    </location>
    <ligand>
        <name>substrate</name>
    </ligand>
</feature>
<name>RBSD_ECO45</name>
<comment type="function">
    <text evidence="1">Catalyzes the interconversion of beta-pyran and beta-furan forms of D-ribose.</text>
</comment>
<comment type="catalytic activity">
    <reaction evidence="1">
        <text>beta-D-ribopyranose = beta-D-ribofuranose</text>
        <dbReference type="Rhea" id="RHEA:25432"/>
        <dbReference type="ChEBI" id="CHEBI:27476"/>
        <dbReference type="ChEBI" id="CHEBI:47002"/>
        <dbReference type="EC" id="5.4.99.62"/>
    </reaction>
</comment>
<comment type="pathway">
    <text evidence="1">Carbohydrate metabolism; D-ribose degradation; D-ribose 5-phosphate from beta-D-ribopyranose: step 1/2.</text>
</comment>
<comment type="subunit">
    <text evidence="1">Homodecamer.</text>
</comment>
<comment type="subcellular location">
    <subcellularLocation>
        <location evidence="1">Cytoplasm</location>
    </subcellularLocation>
</comment>
<comment type="similarity">
    <text evidence="1">Belongs to the RbsD / FucU family. RbsD subfamily.</text>
</comment>
<keyword id="KW-0119">Carbohydrate metabolism</keyword>
<keyword id="KW-0963">Cytoplasm</keyword>
<keyword id="KW-0413">Isomerase</keyword>
<keyword id="KW-1185">Reference proteome</keyword>
<accession>B7MGG8</accession>
<evidence type="ECO:0000255" key="1">
    <source>
        <dbReference type="HAMAP-Rule" id="MF_01661"/>
    </source>
</evidence>
<gene>
    <name evidence="1" type="primary">rbsD</name>
    <name type="ordered locus">ECS88_4170</name>
</gene>